<protein>
    <recommendedName>
        <fullName evidence="1">Thymidylate kinase</fullName>
        <ecNumber evidence="1">2.7.4.9</ecNumber>
    </recommendedName>
    <alternativeName>
        <fullName evidence="1">dTMP kinase</fullName>
    </alternativeName>
</protein>
<sequence length="230" mass="24900">MAKDTPNGAATRGRFITFEGGEGAGKSTQIKLLAERLNAGRIRCVLTREPGGSPGAEIIRHMILSGIGSLIGGTEAETLLFAAARDDHVHTVIEPALAQGSWVLCDRFTDSTRAYQGQMGAVAPALLNAMQRVTIGDLKPDLTIILDVPVEIGVKRARLRRGAAEPDRFEAESLEFHRKLREAYRQIAADEPQRCVLIDANAKVKPVAAKVWAAVQKRLLYSKVSAVQHA</sequence>
<organism>
    <name type="scientific">Rhodopseudomonas palustris (strain BisB18)</name>
    <dbReference type="NCBI Taxonomy" id="316056"/>
    <lineage>
        <taxon>Bacteria</taxon>
        <taxon>Pseudomonadati</taxon>
        <taxon>Pseudomonadota</taxon>
        <taxon>Alphaproteobacteria</taxon>
        <taxon>Hyphomicrobiales</taxon>
        <taxon>Nitrobacteraceae</taxon>
        <taxon>Rhodopseudomonas</taxon>
    </lineage>
</organism>
<feature type="chain" id="PRO_1000023265" description="Thymidylate kinase">
    <location>
        <begin position="1"/>
        <end position="230"/>
    </location>
</feature>
<feature type="binding site" evidence="1">
    <location>
        <begin position="20"/>
        <end position="27"/>
    </location>
    <ligand>
        <name>ATP</name>
        <dbReference type="ChEBI" id="CHEBI:30616"/>
    </ligand>
</feature>
<keyword id="KW-0067">ATP-binding</keyword>
<keyword id="KW-0418">Kinase</keyword>
<keyword id="KW-0545">Nucleotide biosynthesis</keyword>
<keyword id="KW-0547">Nucleotide-binding</keyword>
<keyword id="KW-0808">Transferase</keyword>
<gene>
    <name evidence="1" type="primary">tmk</name>
    <name type="ordered locus">RPC_2703</name>
</gene>
<dbReference type="EC" id="2.7.4.9" evidence="1"/>
<dbReference type="EMBL" id="CP000301">
    <property type="protein sequence ID" value="ABD88252.1"/>
    <property type="molecule type" value="Genomic_DNA"/>
</dbReference>
<dbReference type="SMR" id="Q214D4"/>
<dbReference type="STRING" id="316056.RPC_2703"/>
<dbReference type="KEGG" id="rpc:RPC_2703"/>
<dbReference type="eggNOG" id="COG0125">
    <property type="taxonomic scope" value="Bacteria"/>
</dbReference>
<dbReference type="HOGENOM" id="CLU_049131_0_0_5"/>
<dbReference type="OrthoDB" id="9774907at2"/>
<dbReference type="GO" id="GO:0005829">
    <property type="term" value="C:cytosol"/>
    <property type="evidence" value="ECO:0007669"/>
    <property type="project" value="TreeGrafter"/>
</dbReference>
<dbReference type="GO" id="GO:0005524">
    <property type="term" value="F:ATP binding"/>
    <property type="evidence" value="ECO:0007669"/>
    <property type="project" value="UniProtKB-UniRule"/>
</dbReference>
<dbReference type="GO" id="GO:0004798">
    <property type="term" value="F:dTMP kinase activity"/>
    <property type="evidence" value="ECO:0007669"/>
    <property type="project" value="UniProtKB-UniRule"/>
</dbReference>
<dbReference type="GO" id="GO:0006233">
    <property type="term" value="P:dTDP biosynthetic process"/>
    <property type="evidence" value="ECO:0007669"/>
    <property type="project" value="InterPro"/>
</dbReference>
<dbReference type="GO" id="GO:0006235">
    <property type="term" value="P:dTTP biosynthetic process"/>
    <property type="evidence" value="ECO:0007669"/>
    <property type="project" value="UniProtKB-UniRule"/>
</dbReference>
<dbReference type="GO" id="GO:0006227">
    <property type="term" value="P:dUDP biosynthetic process"/>
    <property type="evidence" value="ECO:0007669"/>
    <property type="project" value="TreeGrafter"/>
</dbReference>
<dbReference type="CDD" id="cd01672">
    <property type="entry name" value="TMPK"/>
    <property type="match status" value="1"/>
</dbReference>
<dbReference type="FunFam" id="3.40.50.300:FF:000225">
    <property type="entry name" value="Thymidylate kinase"/>
    <property type="match status" value="1"/>
</dbReference>
<dbReference type="Gene3D" id="3.40.50.300">
    <property type="entry name" value="P-loop containing nucleotide triphosphate hydrolases"/>
    <property type="match status" value="1"/>
</dbReference>
<dbReference type="HAMAP" id="MF_00165">
    <property type="entry name" value="Thymidylate_kinase"/>
    <property type="match status" value="1"/>
</dbReference>
<dbReference type="InterPro" id="IPR027417">
    <property type="entry name" value="P-loop_NTPase"/>
</dbReference>
<dbReference type="InterPro" id="IPR039430">
    <property type="entry name" value="Thymidylate_kin-like_dom"/>
</dbReference>
<dbReference type="InterPro" id="IPR018095">
    <property type="entry name" value="Thymidylate_kin_CS"/>
</dbReference>
<dbReference type="InterPro" id="IPR018094">
    <property type="entry name" value="Thymidylate_kinase"/>
</dbReference>
<dbReference type="NCBIfam" id="TIGR00041">
    <property type="entry name" value="DTMP_kinase"/>
    <property type="match status" value="1"/>
</dbReference>
<dbReference type="PANTHER" id="PTHR10344">
    <property type="entry name" value="THYMIDYLATE KINASE"/>
    <property type="match status" value="1"/>
</dbReference>
<dbReference type="PANTHER" id="PTHR10344:SF4">
    <property type="entry name" value="UMP-CMP KINASE 2, MITOCHONDRIAL"/>
    <property type="match status" value="1"/>
</dbReference>
<dbReference type="Pfam" id="PF02223">
    <property type="entry name" value="Thymidylate_kin"/>
    <property type="match status" value="1"/>
</dbReference>
<dbReference type="SUPFAM" id="SSF52540">
    <property type="entry name" value="P-loop containing nucleoside triphosphate hydrolases"/>
    <property type="match status" value="1"/>
</dbReference>
<dbReference type="PROSITE" id="PS01331">
    <property type="entry name" value="THYMIDYLATE_KINASE"/>
    <property type="match status" value="1"/>
</dbReference>
<accession>Q214D4</accession>
<proteinExistence type="inferred from homology"/>
<reference key="1">
    <citation type="submission" date="2006-03" db="EMBL/GenBank/DDBJ databases">
        <title>Complete sequence of Rhodopseudomonas palustris BisB18.</title>
        <authorList>
            <consortium name="US DOE Joint Genome Institute"/>
            <person name="Copeland A."/>
            <person name="Lucas S."/>
            <person name="Lapidus A."/>
            <person name="Barry K."/>
            <person name="Detter J.C."/>
            <person name="Glavina del Rio T."/>
            <person name="Hammon N."/>
            <person name="Israni S."/>
            <person name="Dalin E."/>
            <person name="Tice H."/>
            <person name="Pitluck S."/>
            <person name="Chain P."/>
            <person name="Malfatti S."/>
            <person name="Shin M."/>
            <person name="Vergez L."/>
            <person name="Schmutz J."/>
            <person name="Larimer F."/>
            <person name="Land M."/>
            <person name="Hauser L."/>
            <person name="Pelletier D.A."/>
            <person name="Kyrpides N."/>
            <person name="Anderson I."/>
            <person name="Oda Y."/>
            <person name="Harwood C.S."/>
            <person name="Richardson P."/>
        </authorList>
    </citation>
    <scope>NUCLEOTIDE SEQUENCE [LARGE SCALE GENOMIC DNA]</scope>
    <source>
        <strain>BisB18</strain>
    </source>
</reference>
<comment type="function">
    <text evidence="1">Phosphorylation of dTMP to form dTDP in both de novo and salvage pathways of dTTP synthesis.</text>
</comment>
<comment type="catalytic activity">
    <reaction evidence="1">
        <text>dTMP + ATP = dTDP + ADP</text>
        <dbReference type="Rhea" id="RHEA:13517"/>
        <dbReference type="ChEBI" id="CHEBI:30616"/>
        <dbReference type="ChEBI" id="CHEBI:58369"/>
        <dbReference type="ChEBI" id="CHEBI:63528"/>
        <dbReference type="ChEBI" id="CHEBI:456216"/>
        <dbReference type="EC" id="2.7.4.9"/>
    </reaction>
</comment>
<comment type="similarity">
    <text evidence="1">Belongs to the thymidylate kinase family.</text>
</comment>
<evidence type="ECO:0000255" key="1">
    <source>
        <dbReference type="HAMAP-Rule" id="MF_00165"/>
    </source>
</evidence>
<name>KTHY_RHOPB</name>